<comment type="function">
    <text evidence="1">Catalyzes the isomerization between 2-isopropylmalate and 3-isopropylmalate, via the formation of 2-isopropylmaleate.</text>
</comment>
<comment type="catalytic activity">
    <reaction evidence="1">
        <text>(2R,3S)-3-isopropylmalate = (2S)-2-isopropylmalate</text>
        <dbReference type="Rhea" id="RHEA:32287"/>
        <dbReference type="ChEBI" id="CHEBI:1178"/>
        <dbReference type="ChEBI" id="CHEBI:35121"/>
        <dbReference type="EC" id="4.2.1.33"/>
    </reaction>
</comment>
<comment type="pathway">
    <text evidence="1">Amino-acid biosynthesis; L-leucine biosynthesis; L-leucine from 3-methyl-2-oxobutanoate: step 2/4.</text>
</comment>
<comment type="subunit">
    <text evidence="1">Heterodimer of LeuC and LeuD.</text>
</comment>
<comment type="similarity">
    <text evidence="1">Belongs to the LeuD family. LeuD type 1 subfamily.</text>
</comment>
<name>LEUD_BACLD</name>
<keyword id="KW-0028">Amino-acid biosynthesis</keyword>
<keyword id="KW-0100">Branched-chain amino acid biosynthesis</keyword>
<keyword id="KW-0432">Leucine biosynthesis</keyword>
<keyword id="KW-0456">Lyase</keyword>
<keyword id="KW-1185">Reference proteome</keyword>
<dbReference type="EC" id="4.2.1.33" evidence="1"/>
<dbReference type="EMBL" id="AE017333">
    <property type="protein sequence ID" value="AAU41823.1"/>
    <property type="molecule type" value="Genomic_DNA"/>
</dbReference>
<dbReference type="EMBL" id="CP000002">
    <property type="protein sequence ID" value="AAU24461.1"/>
    <property type="molecule type" value="Genomic_DNA"/>
</dbReference>
<dbReference type="RefSeq" id="WP_003184088.1">
    <property type="nucleotide sequence ID" value="NC_006322.1"/>
</dbReference>
<dbReference type="SMR" id="Q65GJ1"/>
<dbReference type="STRING" id="279010.BL00615"/>
<dbReference type="GeneID" id="92860451"/>
<dbReference type="KEGG" id="bld:BLi02955"/>
<dbReference type="KEGG" id="bli:BL00615"/>
<dbReference type="PATRIC" id="fig|279010.13.peg.3015"/>
<dbReference type="eggNOG" id="COG0066">
    <property type="taxonomic scope" value="Bacteria"/>
</dbReference>
<dbReference type="HOGENOM" id="CLU_081378_0_3_9"/>
<dbReference type="UniPathway" id="UPA00048">
    <property type="reaction ID" value="UER00071"/>
</dbReference>
<dbReference type="Proteomes" id="UP000000606">
    <property type="component" value="Chromosome"/>
</dbReference>
<dbReference type="GO" id="GO:0009316">
    <property type="term" value="C:3-isopropylmalate dehydratase complex"/>
    <property type="evidence" value="ECO:0007669"/>
    <property type="project" value="InterPro"/>
</dbReference>
<dbReference type="GO" id="GO:0003861">
    <property type="term" value="F:3-isopropylmalate dehydratase activity"/>
    <property type="evidence" value="ECO:0007669"/>
    <property type="project" value="UniProtKB-UniRule"/>
</dbReference>
<dbReference type="GO" id="GO:0009098">
    <property type="term" value="P:L-leucine biosynthetic process"/>
    <property type="evidence" value="ECO:0007669"/>
    <property type="project" value="UniProtKB-UniRule"/>
</dbReference>
<dbReference type="CDD" id="cd01577">
    <property type="entry name" value="IPMI_Swivel"/>
    <property type="match status" value="1"/>
</dbReference>
<dbReference type="FunFam" id="3.20.19.10:FF:000003">
    <property type="entry name" value="3-isopropylmalate dehydratase small subunit"/>
    <property type="match status" value="1"/>
</dbReference>
<dbReference type="Gene3D" id="3.20.19.10">
    <property type="entry name" value="Aconitase, domain 4"/>
    <property type="match status" value="1"/>
</dbReference>
<dbReference type="HAMAP" id="MF_01031">
    <property type="entry name" value="LeuD_type1"/>
    <property type="match status" value="1"/>
</dbReference>
<dbReference type="InterPro" id="IPR004431">
    <property type="entry name" value="3-IsopropMal_deHydase_ssu"/>
</dbReference>
<dbReference type="InterPro" id="IPR015928">
    <property type="entry name" value="Aconitase/3IPM_dehydase_swvl"/>
</dbReference>
<dbReference type="InterPro" id="IPR000573">
    <property type="entry name" value="AconitaseA/IPMdHydase_ssu_swvl"/>
</dbReference>
<dbReference type="InterPro" id="IPR033940">
    <property type="entry name" value="IPMI_Swivel"/>
</dbReference>
<dbReference type="InterPro" id="IPR050075">
    <property type="entry name" value="LeuD"/>
</dbReference>
<dbReference type="NCBIfam" id="TIGR00171">
    <property type="entry name" value="leuD"/>
    <property type="match status" value="1"/>
</dbReference>
<dbReference type="NCBIfam" id="NF002458">
    <property type="entry name" value="PRK01641.1"/>
    <property type="match status" value="1"/>
</dbReference>
<dbReference type="PANTHER" id="PTHR43345:SF5">
    <property type="entry name" value="3-ISOPROPYLMALATE DEHYDRATASE SMALL SUBUNIT"/>
    <property type="match status" value="1"/>
</dbReference>
<dbReference type="PANTHER" id="PTHR43345">
    <property type="entry name" value="3-ISOPROPYLMALATE DEHYDRATASE SMALL SUBUNIT 2-RELATED-RELATED"/>
    <property type="match status" value="1"/>
</dbReference>
<dbReference type="Pfam" id="PF00694">
    <property type="entry name" value="Aconitase_C"/>
    <property type="match status" value="1"/>
</dbReference>
<dbReference type="SUPFAM" id="SSF52016">
    <property type="entry name" value="LeuD/IlvD-like"/>
    <property type="match status" value="1"/>
</dbReference>
<organism>
    <name type="scientific">Bacillus licheniformis (strain ATCC 14580 / DSM 13 / JCM 2505 / CCUG 7422 / NBRC 12200 / NCIMB 9375 / NCTC 10341 / NRRL NRS-1264 / Gibson 46)</name>
    <dbReference type="NCBI Taxonomy" id="279010"/>
    <lineage>
        <taxon>Bacteria</taxon>
        <taxon>Bacillati</taxon>
        <taxon>Bacillota</taxon>
        <taxon>Bacilli</taxon>
        <taxon>Bacillales</taxon>
        <taxon>Bacillaceae</taxon>
        <taxon>Bacillus</taxon>
    </lineage>
</organism>
<gene>
    <name evidence="1" type="primary">leuD</name>
    <name type="ordered locus">BLi02955</name>
    <name type="ordered locus">BL00615</name>
</gene>
<evidence type="ECO:0000255" key="1">
    <source>
        <dbReference type="HAMAP-Rule" id="MF_01031"/>
    </source>
</evidence>
<sequence length="199" mass="23166">MEPLKTHNGIAAVLNRINVDTDQIIPKQFLKRIERTGYGRFAFFDWRYLDNGDPNPDFELNRPEYKGASILIAGENFGCGSSREHAPWALDDYGFKIIIAPSFADIFHQNCFKNGMLPIRLPYEAWKELAEQYEYQSLTMTVDLEKQTITDHAGRQIAFEVDPHWKEMLLNGYDEISLTLLLEEEIEQFEKQRSSWLQA</sequence>
<reference key="1">
    <citation type="journal article" date="2004" name="J. Mol. Microbiol. Biotechnol.">
        <title>The complete genome sequence of Bacillus licheniformis DSM13, an organism with great industrial potential.</title>
        <authorList>
            <person name="Veith B."/>
            <person name="Herzberg C."/>
            <person name="Steckel S."/>
            <person name="Feesche J."/>
            <person name="Maurer K.H."/>
            <person name="Ehrenreich P."/>
            <person name="Baeumer S."/>
            <person name="Henne A."/>
            <person name="Liesegang H."/>
            <person name="Merkl R."/>
            <person name="Ehrenreich A."/>
            <person name="Gottschalk G."/>
        </authorList>
    </citation>
    <scope>NUCLEOTIDE SEQUENCE [LARGE SCALE GENOMIC DNA]</scope>
    <source>
        <strain>ATCC 14580 / DSM 13 / JCM 2505 / CCUG 7422 / NBRC 12200 / NCIMB 9375 / NCTC 10341 / NRRL NRS-1264 / Gibson 46</strain>
    </source>
</reference>
<reference key="2">
    <citation type="journal article" date="2004" name="Genome Biol.">
        <title>Complete genome sequence of the industrial bacterium Bacillus licheniformis and comparisons with closely related Bacillus species.</title>
        <authorList>
            <person name="Rey M.W."/>
            <person name="Ramaiya P."/>
            <person name="Nelson B.A."/>
            <person name="Brody-Karpin S.D."/>
            <person name="Zaretsky E.J."/>
            <person name="Tang M."/>
            <person name="Lopez de Leon A."/>
            <person name="Xiang H."/>
            <person name="Gusti V."/>
            <person name="Clausen I.G."/>
            <person name="Olsen P.B."/>
            <person name="Rasmussen M.D."/>
            <person name="Andersen J.T."/>
            <person name="Joergensen P.L."/>
            <person name="Larsen T.S."/>
            <person name="Sorokin A."/>
            <person name="Bolotin A."/>
            <person name="Lapidus A."/>
            <person name="Galleron N."/>
            <person name="Ehrlich S.D."/>
            <person name="Berka R.M."/>
        </authorList>
    </citation>
    <scope>NUCLEOTIDE SEQUENCE [LARGE SCALE GENOMIC DNA]</scope>
    <source>
        <strain>ATCC 14580 / DSM 13 / JCM 2505 / CCUG 7422 / NBRC 12200 / NCIMB 9375 / NCTC 10341 / NRRL NRS-1264 / Gibson 46</strain>
    </source>
</reference>
<accession>Q65GJ1</accession>
<accession>Q62RZ9</accession>
<feature type="chain" id="PRO_0000141782" description="3-isopropylmalate dehydratase small subunit">
    <location>
        <begin position="1"/>
        <end position="199"/>
    </location>
</feature>
<proteinExistence type="inferred from homology"/>
<protein>
    <recommendedName>
        <fullName evidence="1">3-isopropylmalate dehydratase small subunit</fullName>
        <ecNumber evidence="1">4.2.1.33</ecNumber>
    </recommendedName>
    <alternativeName>
        <fullName evidence="1">Alpha-IPM isomerase</fullName>
        <shortName evidence="1">IPMI</shortName>
    </alternativeName>
    <alternativeName>
        <fullName evidence="1">Isopropylmalate isomerase</fullName>
    </alternativeName>
</protein>